<accession>Q31ZQ2</accession>
<comment type="function">
    <text evidence="1">Plays a critical role in the incorporation of lipoproteins in the outer membrane after they are released by the LolA protein.</text>
</comment>
<comment type="subunit">
    <text evidence="1">Monomer.</text>
</comment>
<comment type="subcellular location">
    <subcellularLocation>
        <location evidence="1">Cell outer membrane</location>
        <topology evidence="1">Lipid-anchor</topology>
    </subcellularLocation>
</comment>
<comment type="similarity">
    <text evidence="1">Belongs to the LolB family.</text>
</comment>
<evidence type="ECO:0000255" key="1">
    <source>
        <dbReference type="HAMAP-Rule" id="MF_00233"/>
    </source>
</evidence>
<keyword id="KW-0998">Cell outer membrane</keyword>
<keyword id="KW-0143">Chaperone</keyword>
<keyword id="KW-0449">Lipoprotein</keyword>
<keyword id="KW-0472">Membrane</keyword>
<keyword id="KW-0564">Palmitate</keyword>
<keyword id="KW-0653">Protein transport</keyword>
<keyword id="KW-0732">Signal</keyword>
<keyword id="KW-0813">Transport</keyword>
<gene>
    <name evidence="1" type="primary">lolB</name>
    <name type="ordered locus">SBO_1858</name>
</gene>
<feature type="signal peptide" evidence="1">
    <location>
        <begin position="1"/>
        <end position="21"/>
    </location>
</feature>
<feature type="chain" id="PRO_1000021685" description="Outer-membrane lipoprotein LolB">
    <location>
        <begin position="22"/>
        <end position="207"/>
    </location>
</feature>
<feature type="lipid moiety-binding region" description="N-palmitoyl cysteine" evidence="1">
    <location>
        <position position="22"/>
    </location>
</feature>
<feature type="lipid moiety-binding region" description="S-diacylglycerol cysteine" evidence="1">
    <location>
        <position position="22"/>
    </location>
</feature>
<name>LOLB_SHIBS</name>
<reference key="1">
    <citation type="journal article" date="2005" name="Nucleic Acids Res.">
        <title>Genome dynamics and diversity of Shigella species, the etiologic agents of bacillary dysentery.</title>
        <authorList>
            <person name="Yang F."/>
            <person name="Yang J."/>
            <person name="Zhang X."/>
            <person name="Chen L."/>
            <person name="Jiang Y."/>
            <person name="Yan Y."/>
            <person name="Tang X."/>
            <person name="Wang J."/>
            <person name="Xiong Z."/>
            <person name="Dong J."/>
            <person name="Xue Y."/>
            <person name="Zhu Y."/>
            <person name="Xu X."/>
            <person name="Sun L."/>
            <person name="Chen S."/>
            <person name="Nie H."/>
            <person name="Peng J."/>
            <person name="Xu J."/>
            <person name="Wang Y."/>
            <person name="Yuan Z."/>
            <person name="Wen Y."/>
            <person name="Yao Z."/>
            <person name="Shen Y."/>
            <person name="Qiang B."/>
            <person name="Hou Y."/>
            <person name="Yu J."/>
            <person name="Jin Q."/>
        </authorList>
    </citation>
    <scope>NUCLEOTIDE SEQUENCE [LARGE SCALE GENOMIC DNA]</scope>
    <source>
        <strain>Sb227</strain>
    </source>
</reference>
<organism>
    <name type="scientific">Shigella boydii serotype 4 (strain Sb227)</name>
    <dbReference type="NCBI Taxonomy" id="300268"/>
    <lineage>
        <taxon>Bacteria</taxon>
        <taxon>Pseudomonadati</taxon>
        <taxon>Pseudomonadota</taxon>
        <taxon>Gammaproteobacteria</taxon>
        <taxon>Enterobacterales</taxon>
        <taxon>Enterobacteriaceae</taxon>
        <taxon>Shigella</taxon>
    </lineage>
</organism>
<proteinExistence type="inferred from homology"/>
<protein>
    <recommendedName>
        <fullName evidence="1">Outer-membrane lipoprotein LolB</fullName>
    </recommendedName>
</protein>
<sequence length="207" mass="23551">MPLPDFRLIRLLPLAALVLTACSVTTPKGPGKSPDSPQWRQHQQDVRNLNQYQTRGAFAYISDQQKVYARFFWQQTGQDRYRLLLTNPLGSTELELNAQPGNVQLVDNKGQRYTADDAEEMIGKLTGMPIPLNSLRQWILGLPGDATDYKLDDQYRLSEITYSQNGKNWKVVYGGYDTKTQPAMPANMELTDGGQRIKLKMDNWIVK</sequence>
<dbReference type="EMBL" id="CP000036">
    <property type="protein sequence ID" value="ABB66456.1"/>
    <property type="molecule type" value="Genomic_DNA"/>
</dbReference>
<dbReference type="RefSeq" id="WP_001130692.1">
    <property type="nucleotide sequence ID" value="NC_007613.1"/>
</dbReference>
<dbReference type="SMR" id="Q31ZQ2"/>
<dbReference type="GeneID" id="93775274"/>
<dbReference type="KEGG" id="sbo:SBO_1858"/>
<dbReference type="HOGENOM" id="CLU_092816_1_1_6"/>
<dbReference type="Proteomes" id="UP000007067">
    <property type="component" value="Chromosome"/>
</dbReference>
<dbReference type="GO" id="GO:0009279">
    <property type="term" value="C:cell outer membrane"/>
    <property type="evidence" value="ECO:0007669"/>
    <property type="project" value="UniProtKB-SubCell"/>
</dbReference>
<dbReference type="GO" id="GO:0044874">
    <property type="term" value="P:lipoprotein localization to outer membrane"/>
    <property type="evidence" value="ECO:0007669"/>
    <property type="project" value="UniProtKB-UniRule"/>
</dbReference>
<dbReference type="GO" id="GO:0015031">
    <property type="term" value="P:protein transport"/>
    <property type="evidence" value="ECO:0007669"/>
    <property type="project" value="UniProtKB-KW"/>
</dbReference>
<dbReference type="CDD" id="cd16326">
    <property type="entry name" value="LolB"/>
    <property type="match status" value="1"/>
</dbReference>
<dbReference type="FunFam" id="2.50.20.10:FF:000002">
    <property type="entry name" value="Outer-membrane lipoprotein LolB"/>
    <property type="match status" value="1"/>
</dbReference>
<dbReference type="Gene3D" id="2.50.20.10">
    <property type="entry name" value="Lipoprotein localisation LolA/LolB/LppX"/>
    <property type="match status" value="1"/>
</dbReference>
<dbReference type="HAMAP" id="MF_00233">
    <property type="entry name" value="LolB"/>
    <property type="match status" value="1"/>
</dbReference>
<dbReference type="InterPro" id="IPR029046">
    <property type="entry name" value="LolA/LolB/LppX"/>
</dbReference>
<dbReference type="InterPro" id="IPR004565">
    <property type="entry name" value="OM_lipoprot_LolB"/>
</dbReference>
<dbReference type="NCBIfam" id="TIGR00548">
    <property type="entry name" value="lolB"/>
    <property type="match status" value="1"/>
</dbReference>
<dbReference type="Pfam" id="PF03550">
    <property type="entry name" value="LolB"/>
    <property type="match status" value="1"/>
</dbReference>
<dbReference type="SUPFAM" id="SSF89392">
    <property type="entry name" value="Prokaryotic lipoproteins and lipoprotein localization factors"/>
    <property type="match status" value="1"/>
</dbReference>
<dbReference type="PROSITE" id="PS51257">
    <property type="entry name" value="PROKAR_LIPOPROTEIN"/>
    <property type="match status" value="1"/>
</dbReference>